<reference key="1">
    <citation type="journal article" date="2003" name="J. Biol. Chem.">
        <title>Macroautophagy is required for multicellular development of the social amoeba Dictyostelium discoideum.</title>
        <authorList>
            <person name="Otto G.P."/>
            <person name="Wu M.Y."/>
            <person name="Kazgan N."/>
            <person name="Anderson O.R."/>
            <person name="Kessin R.H."/>
        </authorList>
    </citation>
    <scope>NUCLEOTIDE SEQUENCE [GENOMIC DNA]</scope>
    <scope>FUNCTION</scope>
    <source>
        <strain>AX3 / DH1</strain>
    </source>
</reference>
<reference key="2">
    <citation type="journal article" date="2005" name="Nature">
        <title>The genome of the social amoeba Dictyostelium discoideum.</title>
        <authorList>
            <person name="Eichinger L."/>
            <person name="Pachebat J.A."/>
            <person name="Gloeckner G."/>
            <person name="Rajandream M.A."/>
            <person name="Sucgang R."/>
            <person name="Berriman M."/>
            <person name="Song J."/>
            <person name="Olsen R."/>
            <person name="Szafranski K."/>
            <person name="Xu Q."/>
            <person name="Tunggal B."/>
            <person name="Kummerfeld S."/>
            <person name="Madera M."/>
            <person name="Konfortov B.A."/>
            <person name="Rivero F."/>
            <person name="Bankier A.T."/>
            <person name="Lehmann R."/>
            <person name="Hamlin N."/>
            <person name="Davies R."/>
            <person name="Gaudet P."/>
            <person name="Fey P."/>
            <person name="Pilcher K."/>
            <person name="Chen G."/>
            <person name="Saunders D."/>
            <person name="Sodergren E.J."/>
            <person name="Davis P."/>
            <person name="Kerhornou A."/>
            <person name="Nie X."/>
            <person name="Hall N."/>
            <person name="Anjard C."/>
            <person name="Hemphill L."/>
            <person name="Bason N."/>
            <person name="Farbrother P."/>
            <person name="Desany B."/>
            <person name="Just E."/>
            <person name="Morio T."/>
            <person name="Rost R."/>
            <person name="Churcher C.M."/>
            <person name="Cooper J."/>
            <person name="Haydock S."/>
            <person name="van Driessche N."/>
            <person name="Cronin A."/>
            <person name="Goodhead I."/>
            <person name="Muzny D.M."/>
            <person name="Mourier T."/>
            <person name="Pain A."/>
            <person name="Lu M."/>
            <person name="Harper D."/>
            <person name="Lindsay R."/>
            <person name="Hauser H."/>
            <person name="James K.D."/>
            <person name="Quiles M."/>
            <person name="Madan Babu M."/>
            <person name="Saito T."/>
            <person name="Buchrieser C."/>
            <person name="Wardroper A."/>
            <person name="Felder M."/>
            <person name="Thangavelu M."/>
            <person name="Johnson D."/>
            <person name="Knights A."/>
            <person name="Loulseged H."/>
            <person name="Mungall K.L."/>
            <person name="Oliver K."/>
            <person name="Price C."/>
            <person name="Quail M.A."/>
            <person name="Urushihara H."/>
            <person name="Hernandez J."/>
            <person name="Rabbinowitsch E."/>
            <person name="Steffen D."/>
            <person name="Sanders M."/>
            <person name="Ma J."/>
            <person name="Kohara Y."/>
            <person name="Sharp S."/>
            <person name="Simmonds M.N."/>
            <person name="Spiegler S."/>
            <person name="Tivey A."/>
            <person name="Sugano S."/>
            <person name="White B."/>
            <person name="Walker D."/>
            <person name="Woodward J.R."/>
            <person name="Winckler T."/>
            <person name="Tanaka Y."/>
            <person name="Shaulsky G."/>
            <person name="Schleicher M."/>
            <person name="Weinstock G.M."/>
            <person name="Rosenthal A."/>
            <person name="Cox E.C."/>
            <person name="Chisholm R.L."/>
            <person name="Gibbs R.A."/>
            <person name="Loomis W.F."/>
            <person name="Platzer M."/>
            <person name="Kay R.R."/>
            <person name="Williams J.G."/>
            <person name="Dear P.H."/>
            <person name="Noegel A.A."/>
            <person name="Barrell B.G."/>
            <person name="Kuspa A."/>
        </authorList>
    </citation>
    <scope>NUCLEOTIDE SEQUENCE [LARGE SCALE GENOMIC DNA]</scope>
    <source>
        <strain>AX4</strain>
    </source>
</reference>
<reference key="3">
    <citation type="journal article" date="2010" name="Cell. Microbiol.">
        <title>Loss of Dictyostelium ATG9 results in a pleiotropic phenotype affecting growth, development, phagocytosis and clearance and replication of Legionella pneumophila.</title>
        <authorList>
            <person name="Tung S.M."/>
            <person name="Unal C."/>
            <person name="Ley A."/>
            <person name="Pena C."/>
            <person name="Tunggal B."/>
            <person name="Noegel A.A."/>
            <person name="Krut O."/>
            <person name="Steinert M."/>
            <person name="Eichinger L."/>
        </authorList>
    </citation>
    <scope>INDUCTION</scope>
    <scope>SUBCELLULAR LOCATION</scope>
    <scope>DISRUPTION PHENOTYPE</scope>
</reference>
<reference key="4">
    <citation type="journal article" date="2012" name="Biochem. Biophys. Res. Commun.">
        <title>Lipopolysaccharide induction of autophagy is associated with enhanced bactericidal activity in Dictyostelium discoideum.</title>
        <authorList>
            <person name="Pflaum K."/>
            <person name="Gerdes K."/>
            <person name="Yovo K."/>
            <person name="Callahan J."/>
            <person name="Snyder M.L."/>
        </authorList>
    </citation>
    <scope>FUNCTION</scope>
</reference>
<gene>
    <name type="primary">atg9</name>
    <name type="synonym">apg9</name>
    <name type="ORF">DDB_G0285323</name>
</gene>
<accession>Q54NA3</accession>
<accession>Q86CR7</accession>
<proteinExistence type="evidence at transcript level"/>
<keyword id="KW-0072">Autophagy</keyword>
<keyword id="KW-0968">Cytoplasmic vesicle</keyword>
<keyword id="KW-0325">Glycoprotein</keyword>
<keyword id="KW-0445">Lipid transport</keyword>
<keyword id="KW-0472">Membrane</keyword>
<keyword id="KW-1185">Reference proteome</keyword>
<keyword id="KW-0812">Transmembrane</keyword>
<keyword id="KW-1133">Transmembrane helix</keyword>
<keyword id="KW-0813">Transport</keyword>
<protein>
    <recommendedName>
        <fullName>Autophagy-related protein 9</fullName>
    </recommendedName>
</protein>
<name>ATG9_DICDI</name>
<comment type="function">
    <text evidence="1 4 6">Phospholipid scramblase involved in autophagy by mediating autophagosomal membrane expansion. Cycles between the preautophagosomal structure/phagophore assembly site (PAS) and the cytoplasmic vesicle pool and supplies membrane for the growing autophagosome. Lipid scramblase activity plays a key role in preautophagosomal structure/phagophore assembly by distributing the phospholipids that arrive through ATG2 from the cytoplasmic to the luminal leaflet of the bilayer, thereby driving autophagosomal membrane expansion (By similarity). Required for lipopolysaccharide (LPS)-enhanced bacterial clearance through the autophagic pathway (PubMed:12626495, PubMed:22575510).</text>
</comment>
<comment type="catalytic activity">
    <reaction evidence="1">
        <text>a 1,2-diacyl-sn-glycero-3-phosphocholine(in) = a 1,2-diacyl-sn-glycero-3-phosphocholine(out)</text>
        <dbReference type="Rhea" id="RHEA:38571"/>
        <dbReference type="ChEBI" id="CHEBI:57643"/>
    </reaction>
</comment>
<comment type="catalytic activity">
    <reaction evidence="1">
        <text>a 1,2-diacyl-sn-glycero-3-phospho-L-serine(in) = a 1,2-diacyl-sn-glycero-3-phospho-L-serine(out)</text>
        <dbReference type="Rhea" id="RHEA:38663"/>
        <dbReference type="ChEBI" id="CHEBI:57262"/>
    </reaction>
</comment>
<comment type="catalytic activity">
    <reaction evidence="1">
        <text>a 1,2-diacyl-sn-glycero-3-phosphoethanolamine(in) = a 1,2-diacyl-sn-glycero-3-phosphoethanolamine(out)</text>
        <dbReference type="Rhea" id="RHEA:38895"/>
        <dbReference type="ChEBI" id="CHEBI:64612"/>
    </reaction>
</comment>
<comment type="subunit">
    <text evidence="1">Homotrimer; forms a homotrimer with a central pore that forms a path between the two membrane leaflets.</text>
</comment>
<comment type="subcellular location">
    <subcellularLocation>
        <location evidence="5">Preautophagosomal structure membrane</location>
        <topology evidence="5">Multi-pass membrane protein</topology>
    </subcellularLocation>
    <subcellularLocation>
        <location evidence="5">Cytoplasmic vesicle membrane</location>
        <topology evidence="5">Multi-pass membrane protein</topology>
    </subcellularLocation>
</comment>
<comment type="induction">
    <text evidence="5">Expression is up-regulated during development and Legionella infection.</text>
</comment>
<comment type="domain">
    <text evidence="1">Forms a homotrimer with a solvated central pore, which is connected laterally to the cytosol through the cavity within each protomer. Acts as a lipid scramblase that uses its central pore to function: the central pore opens laterally to accommodate lipid headgroups, thereby enabling lipid flipping and redistribution of lipids added to the outer leaflet of ATG9-containing vesicles, thereby enabling growth into autophagosomes.</text>
</comment>
<comment type="disruption phenotype">
    <text evidence="5">Displays severe developmental defects as well as a strong phagocytosis defect.</text>
</comment>
<comment type="similarity">
    <text evidence="7">Belongs to the ATG9 family.</text>
</comment>
<comment type="sequence caution" evidence="7">
    <conflict type="erroneous gene model prediction">
        <sequence resource="EMBL-CDS" id="AAO39079"/>
    </conflict>
</comment>
<sequence length="699" mass="81314">MSHEDRGGDYYPMMDDPEDRNFIQAKYPNSTGHMSSGGGSNHMSFDDNHGIEMLRDDEHSLLHESPVSIPAIHNLDSFLTDVYNYFRGKGFMCIFFNDLFELVSSLFVVLFFTFLVCFVDYSKLFSEQMPPPALRESVNFSAPIPIWLMVFLVIFSLYWLSKLFSFFSSIKTNWEISSFYKNTLKINEDDIQTIEWREVVSKIVLVPRLCIVKENMNALDIANRIMRKENYIIGLINQRILNLSIPFPFLRNLTFITKTLEWSLMYSLFNYIFDENGIIKSEFQDPTQRKRLSRGLSRRFMTIGILGLFTTPFIFFFLLINFFFEYAEELKNRPGSLFSREWSPLARWEFRELNELPHYFQNRLNLSYSHANQYVESFPSQMLSTIAKFISFLFGSVLAVFIVLGIVSDHFIMNYQIFDRTPIWYIGILGTIVAITRSLIVDENQVFQPAKHMARTVQNTHYLPMSWVGKTHTHKVRDEFLVLFEYRIVDFVRDIFSVLFTPFILIFSLPKSSQAIIDFFGNNTVVLEGVGPICQLGDFSNIRKLGDNSFGSLNHSQNKISLTNNAKLEKSIINFKCLNPEWNTDNNELLQNLNEFSKIKNNNNNNNNNGSNNHIGNHSQLPTTSVDDFQFIHDSHYIPHEIIDAVLGTHHHSQQSNNNAPRFKTGRVDQNILNAVNDLHQSFYESQYKHKNDNFVNSI</sequence>
<feature type="chain" id="PRO_0000327585" description="Autophagy-related protein 9">
    <location>
        <begin position="1"/>
        <end position="699"/>
    </location>
</feature>
<feature type="topological domain" description="Cytoplasmic" evidence="7">
    <location>
        <begin position="1"/>
        <end position="98"/>
    </location>
</feature>
<feature type="transmembrane region" description="Helical" evidence="2">
    <location>
        <begin position="99"/>
        <end position="119"/>
    </location>
</feature>
<feature type="topological domain" description="Lumenal" evidence="7">
    <location>
        <begin position="120"/>
        <end position="139"/>
    </location>
</feature>
<feature type="transmembrane region" description="Helical" evidence="2">
    <location>
        <begin position="140"/>
        <end position="160"/>
    </location>
</feature>
<feature type="topological domain" description="Cytoplasmic" evidence="7">
    <location>
        <begin position="161"/>
        <end position="299"/>
    </location>
</feature>
<feature type="intramembrane region" evidence="1">
    <location>
        <begin position="300"/>
        <end position="320"/>
    </location>
</feature>
<feature type="topological domain" description="Cytoplasmic" evidence="7">
    <location>
        <begin position="321"/>
        <end position="385"/>
    </location>
</feature>
<feature type="transmembrane region" description="Helical" evidence="2">
    <location>
        <begin position="386"/>
        <end position="406"/>
    </location>
</feature>
<feature type="topological domain" description="Lumenal" evidence="7">
    <location>
        <begin position="407"/>
        <end position="420"/>
    </location>
</feature>
<feature type="transmembrane region" description="Helical" evidence="2">
    <location>
        <begin position="421"/>
        <end position="441"/>
    </location>
</feature>
<feature type="topological domain" description="Cytoplasmic" evidence="7">
    <location>
        <begin position="442"/>
        <end position="487"/>
    </location>
</feature>
<feature type="intramembrane region" evidence="1">
    <location>
        <begin position="488"/>
        <end position="508"/>
    </location>
</feature>
<feature type="topological domain" description="Cytoplasmic" evidence="7">
    <location>
        <begin position="509"/>
        <end position="699"/>
    </location>
</feature>
<feature type="region of interest" description="Disordered" evidence="3">
    <location>
        <begin position="599"/>
        <end position="620"/>
    </location>
</feature>
<feature type="compositionally biased region" description="Low complexity" evidence="3">
    <location>
        <begin position="599"/>
        <end position="618"/>
    </location>
</feature>
<feature type="glycosylation site" description="N-linked (GlcNAc...) asparagine" evidence="2">
    <location>
        <position position="139"/>
    </location>
</feature>
<evidence type="ECO:0000250" key="1">
    <source>
        <dbReference type="UniProtKB" id="Q7Z3C6"/>
    </source>
</evidence>
<evidence type="ECO:0000255" key="2"/>
<evidence type="ECO:0000256" key="3">
    <source>
        <dbReference type="SAM" id="MobiDB-lite"/>
    </source>
</evidence>
<evidence type="ECO:0000269" key="4">
    <source>
    </source>
</evidence>
<evidence type="ECO:0000269" key="5">
    <source>
    </source>
</evidence>
<evidence type="ECO:0000269" key="6">
    <source>
    </source>
</evidence>
<evidence type="ECO:0000305" key="7"/>
<dbReference type="EMBL" id="AY191016">
    <property type="protein sequence ID" value="AAO39079.1"/>
    <property type="status" value="ALT_SEQ"/>
    <property type="molecule type" value="Genomic_DNA"/>
</dbReference>
<dbReference type="EMBL" id="AAFI02000079">
    <property type="protein sequence ID" value="EAL64736.1"/>
    <property type="molecule type" value="Genomic_DNA"/>
</dbReference>
<dbReference type="RefSeq" id="XP_638277.1">
    <property type="nucleotide sequence ID" value="XM_633185.1"/>
</dbReference>
<dbReference type="SMR" id="Q54NA3"/>
<dbReference type="FunCoup" id="Q54NA3">
    <property type="interactions" value="553"/>
</dbReference>
<dbReference type="STRING" id="44689.Q54NA3"/>
<dbReference type="GlyCosmos" id="Q54NA3">
    <property type="glycosylation" value="1 site, No reported glycans"/>
</dbReference>
<dbReference type="GlyGen" id="Q54NA3">
    <property type="glycosylation" value="1 site"/>
</dbReference>
<dbReference type="PaxDb" id="44689-DDB0191423"/>
<dbReference type="EnsemblProtists" id="EAL64736">
    <property type="protein sequence ID" value="EAL64736"/>
    <property type="gene ID" value="DDB_G0285323"/>
</dbReference>
<dbReference type="GeneID" id="8625085"/>
<dbReference type="KEGG" id="ddi:DDB_G0285323"/>
<dbReference type="dictyBase" id="DDB_G0285323">
    <property type="gene designation" value="atg9"/>
</dbReference>
<dbReference type="VEuPathDB" id="AmoebaDB:DDB_G0285323"/>
<dbReference type="eggNOG" id="KOG2173">
    <property type="taxonomic scope" value="Eukaryota"/>
</dbReference>
<dbReference type="HOGENOM" id="CLU_006200_3_1_1"/>
<dbReference type="InParanoid" id="Q54NA3"/>
<dbReference type="OMA" id="DEHTVWC"/>
<dbReference type="PhylomeDB" id="Q54NA3"/>
<dbReference type="Reactome" id="R-DDI-1632852">
    <property type="pathway name" value="Macroautophagy"/>
</dbReference>
<dbReference type="PRO" id="PR:Q54NA3"/>
<dbReference type="Proteomes" id="UP000002195">
    <property type="component" value="Chromosome 4"/>
</dbReference>
<dbReference type="GO" id="GO:0030659">
    <property type="term" value="C:cytoplasmic vesicle membrane"/>
    <property type="evidence" value="ECO:0007669"/>
    <property type="project" value="UniProtKB-SubCell"/>
</dbReference>
<dbReference type="GO" id="GO:0005794">
    <property type="term" value="C:Golgi apparatus"/>
    <property type="evidence" value="ECO:0000314"/>
    <property type="project" value="dictyBase"/>
</dbReference>
<dbReference type="GO" id="GO:0005874">
    <property type="term" value="C:microtubule"/>
    <property type="evidence" value="ECO:0000314"/>
    <property type="project" value="dictyBase"/>
</dbReference>
<dbReference type="GO" id="GO:0005815">
    <property type="term" value="C:microtubule organizing center"/>
    <property type="evidence" value="ECO:0000314"/>
    <property type="project" value="dictyBase"/>
</dbReference>
<dbReference type="GO" id="GO:0000407">
    <property type="term" value="C:phagophore assembly site"/>
    <property type="evidence" value="ECO:0000318"/>
    <property type="project" value="GO_Central"/>
</dbReference>
<dbReference type="GO" id="GO:0034045">
    <property type="term" value="C:phagophore assembly site membrane"/>
    <property type="evidence" value="ECO:0007669"/>
    <property type="project" value="UniProtKB-SubCell"/>
</dbReference>
<dbReference type="GO" id="GO:0031152">
    <property type="term" value="P:aggregation involved in sorocarp development"/>
    <property type="evidence" value="ECO:0000315"/>
    <property type="project" value="dictyBase"/>
</dbReference>
<dbReference type="GO" id="GO:0019954">
    <property type="term" value="P:asexual reproduction"/>
    <property type="evidence" value="ECO:0000315"/>
    <property type="project" value="dictyBase"/>
</dbReference>
<dbReference type="GO" id="GO:0006869">
    <property type="term" value="P:lipid transport"/>
    <property type="evidence" value="ECO:0007669"/>
    <property type="project" value="UniProtKB-KW"/>
</dbReference>
<dbReference type="GO" id="GO:0000423">
    <property type="term" value="P:mitophagy"/>
    <property type="evidence" value="ECO:0000318"/>
    <property type="project" value="GO_Central"/>
</dbReference>
<dbReference type="GO" id="GO:0006909">
    <property type="term" value="P:phagocytosis"/>
    <property type="evidence" value="ECO:0000315"/>
    <property type="project" value="dictyBase"/>
</dbReference>
<dbReference type="GO" id="GO:0090382">
    <property type="term" value="P:phagosome maturation"/>
    <property type="evidence" value="ECO:0000315"/>
    <property type="project" value="dictyBase"/>
</dbReference>
<dbReference type="GO" id="GO:0042331">
    <property type="term" value="P:phototaxis"/>
    <property type="evidence" value="ECO:0000315"/>
    <property type="project" value="dictyBase"/>
</dbReference>
<dbReference type="GO" id="GO:0034727">
    <property type="term" value="P:piecemeal microautophagy of the nucleus"/>
    <property type="evidence" value="ECO:0000318"/>
    <property type="project" value="GO_Central"/>
</dbReference>
<dbReference type="GO" id="GO:0006907">
    <property type="term" value="P:pinocytosis"/>
    <property type="evidence" value="ECO:0000316"/>
    <property type="project" value="dictyBase"/>
</dbReference>
<dbReference type="GO" id="GO:0043161">
    <property type="term" value="P:proteasome-mediated ubiquitin-dependent protein catabolic process"/>
    <property type="evidence" value="ECO:0000316"/>
    <property type="project" value="dictyBase"/>
</dbReference>
<dbReference type="GO" id="GO:0071692">
    <property type="term" value="P:protein localization to extracellular region"/>
    <property type="evidence" value="ECO:0000315"/>
    <property type="project" value="dictyBase"/>
</dbReference>
<dbReference type="GO" id="GO:0034497">
    <property type="term" value="P:protein localization to phagophore assembly site"/>
    <property type="evidence" value="ECO:0000318"/>
    <property type="project" value="GO_Central"/>
</dbReference>
<dbReference type="GO" id="GO:0010468">
    <property type="term" value="P:regulation of gene expression"/>
    <property type="evidence" value="ECO:0000315"/>
    <property type="project" value="dictyBase"/>
</dbReference>
<dbReference type="GO" id="GO:0009617">
    <property type="term" value="P:response to bacterium"/>
    <property type="evidence" value="ECO:0000315"/>
    <property type="project" value="dictyBase"/>
</dbReference>
<dbReference type="GO" id="GO:0061709">
    <property type="term" value="P:reticulophagy"/>
    <property type="evidence" value="ECO:0000318"/>
    <property type="project" value="GO_Central"/>
</dbReference>
<dbReference type="GO" id="GO:0031153">
    <property type="term" value="P:slug development involved in sorocarp development"/>
    <property type="evidence" value="ECO:0000315"/>
    <property type="project" value="dictyBase"/>
</dbReference>
<dbReference type="GO" id="GO:0031288">
    <property type="term" value="P:sorocarp morphogenesis"/>
    <property type="evidence" value="ECO:0000315"/>
    <property type="project" value="dictyBase"/>
</dbReference>
<dbReference type="GO" id="GO:0048837">
    <property type="term" value="P:sorocarp sorus development"/>
    <property type="evidence" value="ECO:0000315"/>
    <property type="project" value="dictyBase"/>
</dbReference>
<dbReference type="InterPro" id="IPR007241">
    <property type="entry name" value="Autophagy-rel_prot_9"/>
</dbReference>
<dbReference type="PANTHER" id="PTHR13038">
    <property type="entry name" value="APG9 AUTOPHAGY 9"/>
    <property type="match status" value="1"/>
</dbReference>
<dbReference type="PANTHER" id="PTHR13038:SF10">
    <property type="entry name" value="AUTOPHAGY-RELATED PROTEIN 9"/>
    <property type="match status" value="1"/>
</dbReference>
<dbReference type="Pfam" id="PF04109">
    <property type="entry name" value="ATG9"/>
    <property type="match status" value="1"/>
</dbReference>
<organism>
    <name type="scientific">Dictyostelium discoideum</name>
    <name type="common">Social amoeba</name>
    <dbReference type="NCBI Taxonomy" id="44689"/>
    <lineage>
        <taxon>Eukaryota</taxon>
        <taxon>Amoebozoa</taxon>
        <taxon>Evosea</taxon>
        <taxon>Eumycetozoa</taxon>
        <taxon>Dictyostelia</taxon>
        <taxon>Dictyosteliales</taxon>
        <taxon>Dictyosteliaceae</taxon>
        <taxon>Dictyostelium</taxon>
    </lineage>
</organism>